<proteinExistence type="inferred from homology"/>
<protein>
    <recommendedName>
        <fullName>Cytochrome c oxidase subunit 1</fullName>
        <ecNumber>7.1.1.9</ecNumber>
    </recommendedName>
    <alternativeName>
        <fullName>Cytochrome c oxidase polypeptide I</fullName>
    </alternativeName>
</protein>
<organism>
    <name type="scientific">Ascaris suum</name>
    <name type="common">Pig roundworm</name>
    <name type="synonym">Ascaris lumbricoides</name>
    <dbReference type="NCBI Taxonomy" id="6253"/>
    <lineage>
        <taxon>Eukaryota</taxon>
        <taxon>Metazoa</taxon>
        <taxon>Ecdysozoa</taxon>
        <taxon>Nematoda</taxon>
        <taxon>Chromadorea</taxon>
        <taxon>Rhabditida</taxon>
        <taxon>Spirurina</taxon>
        <taxon>Ascaridomorpha</taxon>
        <taxon>Ascaridoidea</taxon>
        <taxon>Ascarididae</taxon>
        <taxon>Ascaris</taxon>
    </lineage>
</organism>
<evidence type="ECO:0000250" key="1">
    <source>
        <dbReference type="UniProtKB" id="P00396"/>
    </source>
</evidence>
<evidence type="ECO:0000250" key="2">
    <source>
        <dbReference type="UniProtKB" id="P00401"/>
    </source>
</evidence>
<evidence type="ECO:0000255" key="3"/>
<evidence type="ECO:0000305" key="4"/>
<geneLocation type="mitochondrion"/>
<dbReference type="EC" id="7.1.1.9"/>
<dbReference type="EMBL" id="X54253">
    <property type="protein sequence ID" value="CAA38171.1"/>
    <property type="molecule type" value="Genomic_DNA"/>
</dbReference>
<dbReference type="PIR" id="S26022">
    <property type="entry name" value="S26022"/>
</dbReference>
<dbReference type="SMR" id="P24881"/>
<dbReference type="CTD" id="4512"/>
<dbReference type="UniPathway" id="UPA00705"/>
<dbReference type="GO" id="GO:0005743">
    <property type="term" value="C:mitochondrial inner membrane"/>
    <property type="evidence" value="ECO:0007669"/>
    <property type="project" value="UniProtKB-SubCell"/>
</dbReference>
<dbReference type="GO" id="GO:0045277">
    <property type="term" value="C:respiratory chain complex IV"/>
    <property type="evidence" value="ECO:0007669"/>
    <property type="project" value="InterPro"/>
</dbReference>
<dbReference type="GO" id="GO:0004129">
    <property type="term" value="F:cytochrome-c oxidase activity"/>
    <property type="evidence" value="ECO:0007669"/>
    <property type="project" value="UniProtKB-EC"/>
</dbReference>
<dbReference type="GO" id="GO:0020037">
    <property type="term" value="F:heme binding"/>
    <property type="evidence" value="ECO:0007669"/>
    <property type="project" value="InterPro"/>
</dbReference>
<dbReference type="GO" id="GO:0046872">
    <property type="term" value="F:metal ion binding"/>
    <property type="evidence" value="ECO:0007669"/>
    <property type="project" value="UniProtKB-KW"/>
</dbReference>
<dbReference type="GO" id="GO:0015990">
    <property type="term" value="P:electron transport coupled proton transport"/>
    <property type="evidence" value="ECO:0007669"/>
    <property type="project" value="TreeGrafter"/>
</dbReference>
<dbReference type="GO" id="GO:0006123">
    <property type="term" value="P:mitochondrial electron transport, cytochrome c to oxygen"/>
    <property type="evidence" value="ECO:0007669"/>
    <property type="project" value="TreeGrafter"/>
</dbReference>
<dbReference type="CDD" id="cd01663">
    <property type="entry name" value="Cyt_c_Oxidase_I"/>
    <property type="match status" value="1"/>
</dbReference>
<dbReference type="Gene3D" id="1.20.210.10">
    <property type="entry name" value="Cytochrome c oxidase-like, subunit I domain"/>
    <property type="match status" value="1"/>
</dbReference>
<dbReference type="InterPro" id="IPR023616">
    <property type="entry name" value="Cyt_c_oxase-like_su1_dom"/>
</dbReference>
<dbReference type="InterPro" id="IPR036927">
    <property type="entry name" value="Cyt_c_oxase-like_su1_sf"/>
</dbReference>
<dbReference type="InterPro" id="IPR000883">
    <property type="entry name" value="Cyt_C_Oxase_1"/>
</dbReference>
<dbReference type="InterPro" id="IPR023615">
    <property type="entry name" value="Cyt_c_Oxase_su1_BS"/>
</dbReference>
<dbReference type="InterPro" id="IPR033944">
    <property type="entry name" value="Cyt_c_oxase_su1_dom"/>
</dbReference>
<dbReference type="PANTHER" id="PTHR10422">
    <property type="entry name" value="CYTOCHROME C OXIDASE SUBUNIT 1"/>
    <property type="match status" value="1"/>
</dbReference>
<dbReference type="PANTHER" id="PTHR10422:SF18">
    <property type="entry name" value="CYTOCHROME C OXIDASE SUBUNIT 1"/>
    <property type="match status" value="1"/>
</dbReference>
<dbReference type="Pfam" id="PF00115">
    <property type="entry name" value="COX1"/>
    <property type="match status" value="1"/>
</dbReference>
<dbReference type="PRINTS" id="PR01165">
    <property type="entry name" value="CYCOXIDASEI"/>
</dbReference>
<dbReference type="SUPFAM" id="SSF81442">
    <property type="entry name" value="Cytochrome c oxidase subunit I-like"/>
    <property type="match status" value="1"/>
</dbReference>
<dbReference type="PROSITE" id="PS50855">
    <property type="entry name" value="COX1"/>
    <property type="match status" value="1"/>
</dbReference>
<dbReference type="PROSITE" id="PS00077">
    <property type="entry name" value="COX1_CUB"/>
    <property type="match status" value="1"/>
</dbReference>
<accession>P24881</accession>
<comment type="function">
    <text evidence="2">Component of the cytochrome c oxidase, the last enzyme in the mitochondrial electron transport chain which drives oxidative phosphorylation. The respiratory chain contains 3 multisubunit complexes succinate dehydrogenase (complex II, CII), ubiquinol-cytochrome c oxidoreductase (cytochrome b-c1 complex, complex III, CIII) and cytochrome c oxidase (complex IV, CIV), that cooperate to transfer electrons derived from NADH and succinate to molecular oxygen, creating an electrochemical gradient over the inner membrane that drives transmembrane transport and the ATP synthase. Cytochrome c oxidase is the component of the respiratory chain that catalyzes the reduction of oxygen to water. Electrons originating from reduced cytochrome c in the intermembrane space (IMS) are transferred via the dinuclear copper A center (CU(A)) of subunit 2 and heme A of subunit 1 to the active site in subunit 1, a binuclear center (BNC) formed by heme A3 and copper B (CU(B)). The BNC reduces molecular oxygen to 2 water molecules using 4 electrons from cytochrome c in the IMS and 4 protons from the mitochondrial matrix.</text>
</comment>
<comment type="catalytic activity">
    <reaction evidence="2">
        <text>4 Fe(II)-[cytochrome c] + O2 + 8 H(+)(in) = 4 Fe(III)-[cytochrome c] + 2 H2O + 4 H(+)(out)</text>
        <dbReference type="Rhea" id="RHEA:11436"/>
        <dbReference type="Rhea" id="RHEA-COMP:10350"/>
        <dbReference type="Rhea" id="RHEA-COMP:14399"/>
        <dbReference type="ChEBI" id="CHEBI:15377"/>
        <dbReference type="ChEBI" id="CHEBI:15378"/>
        <dbReference type="ChEBI" id="CHEBI:15379"/>
        <dbReference type="ChEBI" id="CHEBI:29033"/>
        <dbReference type="ChEBI" id="CHEBI:29034"/>
        <dbReference type="EC" id="7.1.1.9"/>
    </reaction>
    <physiologicalReaction direction="left-to-right" evidence="2">
        <dbReference type="Rhea" id="RHEA:11437"/>
    </physiologicalReaction>
</comment>
<comment type="cofactor">
    <cofactor evidence="2">
        <name>heme</name>
        <dbReference type="ChEBI" id="CHEBI:30413"/>
    </cofactor>
    <text evidence="2">Binds 2 heme A groups non-covalently per subunit.</text>
</comment>
<comment type="cofactor">
    <cofactor evidence="2">
        <name>Cu cation</name>
        <dbReference type="ChEBI" id="CHEBI:23378"/>
    </cofactor>
    <text evidence="2">Binds a copper B center.</text>
</comment>
<comment type="pathway">
    <text evidence="2">Energy metabolism; oxidative phosphorylation.</text>
</comment>
<comment type="subunit">
    <text evidence="2">Component of the cytochrome c oxidase (complex IV, CIV), a multisubunit enzyme composed of a catalytic core of 3 subunits and several supernumerary subunits. The complex exists as a monomer or a dimer and forms supercomplexes (SCs) in the inner mitochondrial membrane with ubiquinol-cytochrome c oxidoreductase (cytochrome b-c1 complex, complex III, CIII).</text>
</comment>
<comment type="subcellular location">
    <subcellularLocation>
        <location evidence="2">Mitochondrion inner membrane</location>
        <topology evidence="2">Multi-pass membrane protein</topology>
    </subcellularLocation>
</comment>
<comment type="similarity">
    <text evidence="4">Belongs to the heme-copper respiratory oxidase family.</text>
</comment>
<gene>
    <name type="primary">COI</name>
</gene>
<keyword id="KW-0106">Calcium</keyword>
<keyword id="KW-0186">Copper</keyword>
<keyword id="KW-0249">Electron transport</keyword>
<keyword id="KW-0349">Heme</keyword>
<keyword id="KW-0408">Iron</keyword>
<keyword id="KW-0460">Magnesium</keyword>
<keyword id="KW-0472">Membrane</keyword>
<keyword id="KW-0479">Metal-binding</keyword>
<keyword id="KW-0496">Mitochondrion</keyword>
<keyword id="KW-0999">Mitochondrion inner membrane</keyword>
<keyword id="KW-0679">Respiratory chain</keyword>
<keyword id="KW-1278">Translocase</keyword>
<keyword id="KW-0812">Transmembrane</keyword>
<keyword id="KW-1133">Transmembrane helix</keyword>
<keyword id="KW-0813">Transport</keyword>
<name>COX1_ASCSU</name>
<sequence>MSGFYKYQGGLSVWLESSNHKDIGTLYFLFGLWSGMVGTSLSLVIRLELAKPGLLLGSGQLYNSVITAHAILMIFFMVMPTMIGGFGNWMLPLMLGAPDMSFPRLNNLSFWLLPTAMFLILDACFVDMGCGTSWTVYPPLSTMGHPGGSVDLAIFSLHCAGVSSILGAINFMTTTKNLRSSSISLEHMSLFVWTVFVTVFLLVLSLPVLAGAITMLLTDRNLNTSFFDPSTGGNPLIYQHLFWFFGHPEVYILILPAFGIISQSSLYLTGKKEVFGSLGMVYAILSIGLIGCVVWAHHMYTVGMDLDSRAYFTAATMVIAVPTGVKVFSWLATLFGMKMVFQPLLLWVMGFIFLFTIGGLTGVMLSNSSLDIILHDTYYVVSHFHYVLSLGAVFGIFTGVTLWWSFITGFVYDKMMMSSVFVLMFVGVNLTFFPLHFAGIHGYPRKYLDYPDVYSVWNIMASYGSMISVFALFLFIYVLLESFVGHRIFLFDYYVNSGPEYSLSGYVFGHSYQSEIFYSSIVFKF</sequence>
<reference key="1">
    <citation type="journal article" date="1992" name="Genetics">
        <title>The mitochondrial genomes of two nematodes, Caenorhabditis elegans and Ascaris suum.</title>
        <authorList>
            <person name="Okimoto R."/>
            <person name="Macfarlane J.L."/>
            <person name="Clary D.O."/>
            <person name="Wolstenholme D.R."/>
        </authorList>
    </citation>
    <scope>NUCLEOTIDE SEQUENCE [GENOMIC DNA]</scope>
    <source>
        <tissue>Body wall muscle</tissue>
        <tissue>Egg</tissue>
    </source>
</reference>
<feature type="chain" id="PRO_0000183288" description="Cytochrome c oxidase subunit 1">
    <location>
        <begin position="1"/>
        <end position="525"/>
    </location>
</feature>
<feature type="transmembrane region" description="Helical" evidence="3">
    <location>
        <begin position="25"/>
        <end position="45"/>
    </location>
</feature>
<feature type="transmembrane region" description="Helical" evidence="3">
    <location>
        <begin position="71"/>
        <end position="91"/>
    </location>
</feature>
<feature type="transmembrane region" description="Helical" evidence="3">
    <location>
        <begin position="108"/>
        <end position="128"/>
    </location>
</feature>
<feature type="transmembrane region" description="Helical" evidence="3">
    <location>
        <begin position="152"/>
        <end position="172"/>
    </location>
</feature>
<feature type="transmembrane region" description="Helical" evidence="3">
    <location>
        <begin position="190"/>
        <end position="210"/>
    </location>
</feature>
<feature type="transmembrane region" description="Helical" evidence="3">
    <location>
        <begin position="241"/>
        <end position="261"/>
    </location>
</feature>
<feature type="transmembrane region" description="Helical" evidence="3">
    <location>
        <begin position="274"/>
        <end position="294"/>
    </location>
</feature>
<feature type="transmembrane region" description="Helical" evidence="3">
    <location>
        <begin position="317"/>
        <end position="337"/>
    </location>
</feature>
<feature type="transmembrane region" description="Helical" evidence="3">
    <location>
        <begin position="344"/>
        <end position="364"/>
    </location>
</feature>
<feature type="transmembrane region" description="Helical" evidence="3">
    <location>
        <begin position="387"/>
        <end position="407"/>
    </location>
</feature>
<feature type="transmembrane region" description="Helical" evidence="3">
    <location>
        <begin position="420"/>
        <end position="440"/>
    </location>
</feature>
<feature type="transmembrane region" description="Helical" evidence="3">
    <location>
        <begin position="459"/>
        <end position="479"/>
    </location>
</feature>
<feature type="binding site" evidence="2">
    <location>
        <position position="48"/>
    </location>
    <ligand>
        <name>Ca(2+)</name>
        <dbReference type="ChEBI" id="CHEBI:29108"/>
    </ligand>
</feature>
<feature type="binding site" evidence="2">
    <location>
        <position position="53"/>
    </location>
    <ligand>
        <name>Ca(2+)</name>
        <dbReference type="ChEBI" id="CHEBI:29108"/>
    </ligand>
</feature>
<feature type="binding site" description="axial binding residue" evidence="2">
    <location>
        <position position="69"/>
    </location>
    <ligand>
        <name>Fe(II)-heme a</name>
        <dbReference type="ChEBI" id="CHEBI:61715"/>
        <note>low-spin</note>
    </ligand>
    <ligandPart>
        <name>Fe</name>
        <dbReference type="ChEBI" id="CHEBI:18248"/>
    </ligandPart>
</feature>
<feature type="binding site" evidence="2">
    <location>
        <position position="247"/>
    </location>
    <ligand>
        <name>Cu cation</name>
        <dbReference type="ChEBI" id="CHEBI:23378"/>
        <label>B</label>
    </ligand>
</feature>
<feature type="binding site" evidence="1">
    <location>
        <position position="251"/>
    </location>
    <ligand>
        <name>O2</name>
        <dbReference type="ChEBI" id="CHEBI:15379"/>
    </ligand>
</feature>
<feature type="binding site" evidence="2">
    <location>
        <position position="297"/>
    </location>
    <ligand>
        <name>Cu cation</name>
        <dbReference type="ChEBI" id="CHEBI:23378"/>
        <label>B</label>
    </ligand>
</feature>
<feature type="binding site" evidence="2">
    <location>
        <position position="298"/>
    </location>
    <ligand>
        <name>Cu cation</name>
        <dbReference type="ChEBI" id="CHEBI:23378"/>
        <label>B</label>
    </ligand>
</feature>
<feature type="binding site" evidence="2">
    <location>
        <position position="375"/>
    </location>
    <ligand>
        <name>Mg(2+)</name>
        <dbReference type="ChEBI" id="CHEBI:18420"/>
        <note>ligand shared with subunit 2</note>
    </ligand>
</feature>
<feature type="binding site" evidence="2">
    <location>
        <position position="376"/>
    </location>
    <ligand>
        <name>Mg(2+)</name>
        <dbReference type="ChEBI" id="CHEBI:18420"/>
        <note>ligand shared with subunit 2</note>
    </ligand>
</feature>
<feature type="binding site" description="axial binding residue" evidence="2">
    <location>
        <position position="383"/>
    </location>
    <ligand>
        <name>heme a3</name>
        <dbReference type="ChEBI" id="CHEBI:83282"/>
        <note>high-spin</note>
    </ligand>
    <ligandPart>
        <name>Fe</name>
        <dbReference type="ChEBI" id="CHEBI:18248"/>
    </ligandPart>
</feature>
<feature type="binding site" description="axial binding residue" evidence="2">
    <location>
        <position position="385"/>
    </location>
    <ligand>
        <name>Fe(II)-heme a</name>
        <dbReference type="ChEBI" id="CHEBI:61715"/>
        <note>low-spin</note>
    </ligand>
    <ligandPart>
        <name>Fe</name>
        <dbReference type="ChEBI" id="CHEBI:18248"/>
    </ligandPart>
</feature>
<feature type="cross-link" description="1'-histidyl-3'-tyrosine (His-Tyr)" evidence="2">
    <location>
        <begin position="247"/>
        <end position="251"/>
    </location>
</feature>